<evidence type="ECO:0000256" key="1">
    <source>
        <dbReference type="SAM" id="MobiDB-lite"/>
    </source>
</evidence>
<evidence type="ECO:0000269" key="2">
    <source>
    </source>
</evidence>
<evidence type="ECO:0000305" key="3"/>
<organismHost>
    <name type="scientific">Crataegus</name>
    <name type="common">hawthorn</name>
    <dbReference type="NCBI Taxonomy" id="23159"/>
</organismHost>
<organismHost>
    <name type="scientific">Cydonia oblonga</name>
    <name type="common">Quince</name>
    <name type="synonym">Pyrus cydonia</name>
    <dbReference type="NCBI Taxonomy" id="36610"/>
</organismHost>
<organismHost>
    <name type="scientific">Malus sylvestris</name>
    <name type="common">European crab apple</name>
    <dbReference type="NCBI Taxonomy" id="3752"/>
</organismHost>
<organismHost>
    <name type="scientific">Prunus armeniaca</name>
    <name type="common">Apricot</name>
    <name type="synonym">Armeniaca vulgaris</name>
    <dbReference type="NCBI Taxonomy" id="36596"/>
</organismHost>
<organismHost>
    <name type="scientific">Prunus domestica</name>
    <name type="common">Garden plum</name>
    <dbReference type="NCBI Taxonomy" id="3758"/>
</organismHost>
<organismHost>
    <name type="scientific">Prunus persica</name>
    <name type="common">Peach</name>
    <name type="synonym">Amygdalus persica</name>
    <dbReference type="NCBI Taxonomy" id="3760"/>
</organismHost>
<organismHost>
    <name type="scientific">Prunus spinosa</name>
    <name type="common">Blackthorn</name>
    <name type="synonym">Prunus domestica var. spinosa</name>
    <dbReference type="NCBI Taxonomy" id="114937"/>
</organismHost>
<organismHost>
    <name type="scientific">Pyrus communis</name>
    <name type="common">Pear</name>
    <name type="synonym">Pyrus domestica</name>
    <dbReference type="NCBI Taxonomy" id="23211"/>
</organismHost>
<organism>
    <name type="scientific">Apple chlorotic leaf spot virus (isolate plum P863)</name>
    <name type="common">ACLSV</name>
    <dbReference type="NCBI Taxonomy" id="73473"/>
    <lineage>
        <taxon>Viruses</taxon>
        <taxon>Riboviria</taxon>
        <taxon>Orthornavirae</taxon>
        <taxon>Kitrinoviricota</taxon>
        <taxon>Alsuviricetes</taxon>
        <taxon>Tymovirales</taxon>
        <taxon>Betaflexiviridae</taxon>
        <taxon>Trivirinae</taxon>
        <taxon>Trichovirus</taxon>
        <taxon>Trichovirus mali</taxon>
    </lineage>
</organism>
<protein>
    <recommendedName>
        <fullName>Putative movement protein</fullName>
    </recommendedName>
    <alternativeName>
        <fullName>50.8 kDa protein</fullName>
    </alternativeName>
    <alternativeName>
        <fullName>ORF2 protein</fullName>
    </alternativeName>
</protein>
<proteinExistence type="inferred from homology"/>
<reference key="1">
    <citation type="journal article" date="1990" name="Virology">
        <title>Nucleotide sequence and genomic organization of apple chlorotic leaf spot closterovirus.</title>
        <authorList>
            <person name="German S."/>
            <person name="Candresse T."/>
            <person name="Lanneau M."/>
            <person name="Huet J.-C."/>
            <person name="Pernollet J.-C."/>
            <person name="Dunez J."/>
        </authorList>
    </citation>
    <scope>NUCLEOTIDE SEQUENCE [GENOMIC RNA]</scope>
</reference>
<reference key="2">
    <citation type="journal article" date="2008" name="Virology">
        <title>Inhibition of long-distance movement of RNA silencing signals in Nicotiana benthamiana by Apple chlorotic leaf spot virus 50 kDa movement protein.</title>
        <authorList>
            <person name="Yaegashi H."/>
            <person name="Tamura A."/>
            <person name="Isogai M."/>
            <person name="Yoshikawa N."/>
        </authorList>
    </citation>
    <scope>FUNCTION</scope>
</reference>
<sequence length="460" mass="50832">MATMIRGHRLRIAEGDIPIAGVKSSRIYSDISPFKKASDLMIHWNEFVFKVMPEDIAGDGFRLASIPVIPSSEVQAVLRKRESTNYVHWGALSISIDALFRKNAGVSGWCYVYDNRWETFEQAMLQKFHFNLDSGSATLVTSPNFPVSLDDPGLSNSISVAVMFENLNFKFESYPISVRVGNMCRFFDSFLSSVKNKVDSNFLLEASNADPLGVGAFGFEQDDQVSELFNYIQTVPTQAIKFREHEIPKGFLGMMGKKKIKSFEFASGSKGMERRKPNRGKQIDRSFSQRAVPGFRSQNEKVEHQGLSTDSDFENFLRNKRGNKAGVKSTASEGSSVDNISSREFQFARQNQAKEDGSSSEFAAQGGRKSKGISGRRKQTSSWKDRGNPGTDTGVHLREHSDPGNVRADGVSGPSGGSEINGGSISPRVLQPEGSGQLDQSFQDYLFGPEHQQNDIPSGL</sequence>
<feature type="chain" id="PRO_0000222545" description="Putative movement protein">
    <location>
        <begin position="1"/>
        <end position="460"/>
    </location>
</feature>
<feature type="region of interest" description="Disordered" evidence="1">
    <location>
        <begin position="267"/>
        <end position="314"/>
    </location>
</feature>
<feature type="region of interest" description="Disordered" evidence="1">
    <location>
        <begin position="349"/>
        <end position="460"/>
    </location>
</feature>
<feature type="compositionally biased region" description="Basic residues" evidence="1">
    <location>
        <begin position="368"/>
        <end position="379"/>
    </location>
</feature>
<dbReference type="EMBL" id="M58152">
    <property type="protein sequence ID" value="AAA42588.1"/>
    <property type="molecule type" value="Genomic_RNA"/>
</dbReference>
<dbReference type="PIR" id="B45353">
    <property type="entry name" value="B45353"/>
</dbReference>
<dbReference type="RefSeq" id="NP_040552.1">
    <property type="nucleotide sequence ID" value="NC_001409.1"/>
</dbReference>
<dbReference type="GeneID" id="1493998"/>
<dbReference type="KEGG" id="vg:1493998"/>
<dbReference type="Proteomes" id="UP000007025">
    <property type="component" value="Segment"/>
</dbReference>
<dbReference type="GO" id="GO:0004252">
    <property type="term" value="F:serine-type endopeptidase activity"/>
    <property type="evidence" value="ECO:0007669"/>
    <property type="project" value="InterPro"/>
</dbReference>
<dbReference type="GO" id="GO:0006508">
    <property type="term" value="P:proteolysis"/>
    <property type="evidence" value="ECO:0007669"/>
    <property type="project" value="InterPro"/>
</dbReference>
<dbReference type="GO" id="GO:0052170">
    <property type="term" value="P:symbiont-mediated suppression of host innate immune response"/>
    <property type="evidence" value="ECO:0007669"/>
    <property type="project" value="UniProtKB-KW"/>
</dbReference>
<dbReference type="GO" id="GO:0046740">
    <property type="term" value="P:transport of virus in host, cell to cell"/>
    <property type="evidence" value="ECO:0007669"/>
    <property type="project" value="UniProtKB-KW"/>
</dbReference>
<dbReference type="InterPro" id="IPR001815">
    <property type="entry name" value="Trichovirus_mp"/>
</dbReference>
<dbReference type="InterPro" id="IPR028919">
    <property type="entry name" value="Viral_movement"/>
</dbReference>
<dbReference type="Pfam" id="PF01107">
    <property type="entry name" value="MP"/>
    <property type="match status" value="1"/>
</dbReference>
<dbReference type="PRINTS" id="PR00995">
    <property type="entry name" value="CAPILLOPTASE"/>
</dbReference>
<name>MP_ACLSP</name>
<comment type="function">
    <text evidence="2">Suppressor of viral-induced RNA silencing.</text>
</comment>
<comment type="similarity">
    <text evidence="3">Belongs to the tobamoviruses movement protein family.</text>
</comment>
<keyword id="KW-0945">Host-virus interaction</keyword>
<keyword id="KW-1090">Inhibition of host innate immune response by virus</keyword>
<keyword id="KW-1185">Reference proteome</keyword>
<keyword id="KW-0941">Suppressor of RNA silencing</keyword>
<keyword id="KW-0813">Transport</keyword>
<keyword id="KW-0899">Viral immunoevasion</keyword>
<keyword id="KW-0916">Viral movement protein</keyword>
<accession>P27739</accession>